<keyword id="KW-0067">ATP-binding</keyword>
<keyword id="KW-0342">GTP-binding</keyword>
<keyword id="KW-0547">Nucleotide-binding</keyword>
<keyword id="KW-1185">Reference proteome</keyword>
<evidence type="ECO:0000255" key="1">
    <source>
        <dbReference type="HAMAP-Rule" id="MF_00636"/>
    </source>
</evidence>
<evidence type="ECO:0000305" key="2"/>
<comment type="function">
    <text evidence="1">Displays ATPase and GTPase activities.</text>
</comment>
<comment type="similarity">
    <text evidence="1">Belongs to the RapZ-like family.</text>
</comment>
<comment type="sequence caution" evidence="2">
    <conflict type="erroneous initiation">
        <sequence resource="EMBL-CDS" id="ABD29916"/>
    </conflict>
</comment>
<organism>
    <name type="scientific">Staphylococcus aureus (strain NCTC 8325 / PS 47)</name>
    <dbReference type="NCBI Taxonomy" id="93061"/>
    <lineage>
        <taxon>Bacteria</taxon>
        <taxon>Bacillati</taxon>
        <taxon>Bacillota</taxon>
        <taxon>Bacilli</taxon>
        <taxon>Bacillales</taxon>
        <taxon>Staphylococcaceae</taxon>
        <taxon>Staphylococcus</taxon>
    </lineage>
</organism>
<feature type="chain" id="PRO_0000383290" description="Nucleotide-binding protein SAOUHSC_00787">
    <location>
        <begin position="1"/>
        <end position="303"/>
    </location>
</feature>
<feature type="binding site" evidence="1">
    <location>
        <begin position="18"/>
        <end position="25"/>
    </location>
    <ligand>
        <name>ATP</name>
        <dbReference type="ChEBI" id="CHEBI:30616"/>
    </ligand>
</feature>
<feature type="binding site" evidence="1">
    <location>
        <begin position="69"/>
        <end position="72"/>
    </location>
    <ligand>
        <name>GTP</name>
        <dbReference type="ChEBI" id="CHEBI:37565"/>
    </ligand>
</feature>
<reference key="1">
    <citation type="book" date="2006" name="Gram positive pathogens, 2nd edition">
        <title>The Staphylococcus aureus NCTC 8325 genome.</title>
        <editorList>
            <person name="Fischetti V."/>
            <person name="Novick R."/>
            <person name="Ferretti J."/>
            <person name="Portnoy D."/>
            <person name="Rood J."/>
        </editorList>
        <authorList>
            <person name="Gillaspy A.F."/>
            <person name="Worrell V."/>
            <person name="Orvis J."/>
            <person name="Roe B.A."/>
            <person name="Dyer D.W."/>
            <person name="Iandolo J.J."/>
        </authorList>
    </citation>
    <scope>NUCLEOTIDE SEQUENCE [LARGE SCALE GENOMIC DNA]</scope>
    <source>
        <strain>NCTC 8325 / PS 47</strain>
    </source>
</reference>
<protein>
    <recommendedName>
        <fullName evidence="1">Nucleotide-binding protein SAOUHSC_00787</fullName>
    </recommendedName>
</protein>
<gene>
    <name type="ordered locus">SAOUHSC_00787</name>
</gene>
<accession>Q2G039</accession>
<dbReference type="EMBL" id="CP000253">
    <property type="protein sequence ID" value="ABD29916.1"/>
    <property type="status" value="ALT_INIT"/>
    <property type="molecule type" value="Genomic_DNA"/>
</dbReference>
<dbReference type="RefSeq" id="YP_499344.2">
    <property type="nucleotide sequence ID" value="NC_007795.1"/>
</dbReference>
<dbReference type="SMR" id="Q2G039"/>
<dbReference type="STRING" id="93061.SAOUHSC_00787"/>
<dbReference type="PaxDb" id="1280-SAXN108_0833"/>
<dbReference type="GeneID" id="3919351"/>
<dbReference type="KEGG" id="sao:SAOUHSC_00787"/>
<dbReference type="PATRIC" id="fig|93061.5.peg.710"/>
<dbReference type="eggNOG" id="COG1660">
    <property type="taxonomic scope" value="Bacteria"/>
</dbReference>
<dbReference type="HOGENOM" id="CLU_059558_0_0_9"/>
<dbReference type="OrthoDB" id="9784461at2"/>
<dbReference type="PRO" id="PR:Q2G039"/>
<dbReference type="Proteomes" id="UP000008816">
    <property type="component" value="Chromosome"/>
</dbReference>
<dbReference type="GO" id="GO:0005524">
    <property type="term" value="F:ATP binding"/>
    <property type="evidence" value="ECO:0007669"/>
    <property type="project" value="UniProtKB-UniRule"/>
</dbReference>
<dbReference type="GO" id="GO:0005525">
    <property type="term" value="F:GTP binding"/>
    <property type="evidence" value="ECO:0007669"/>
    <property type="project" value="UniProtKB-UniRule"/>
</dbReference>
<dbReference type="GO" id="GO:0060090">
    <property type="term" value="F:molecular adaptor activity"/>
    <property type="evidence" value="ECO:0000318"/>
    <property type="project" value="GO_Central"/>
</dbReference>
<dbReference type="Gene3D" id="3.40.50.300">
    <property type="entry name" value="P-loop containing nucleotide triphosphate hydrolases"/>
    <property type="match status" value="1"/>
</dbReference>
<dbReference type="HAMAP" id="MF_00636">
    <property type="entry name" value="RapZ_like"/>
    <property type="match status" value="1"/>
</dbReference>
<dbReference type="InterPro" id="IPR027417">
    <property type="entry name" value="P-loop_NTPase"/>
</dbReference>
<dbReference type="InterPro" id="IPR005337">
    <property type="entry name" value="RapZ-like"/>
</dbReference>
<dbReference type="InterPro" id="IPR053930">
    <property type="entry name" value="RapZ-like_N"/>
</dbReference>
<dbReference type="InterPro" id="IPR053931">
    <property type="entry name" value="RapZ_C"/>
</dbReference>
<dbReference type="NCBIfam" id="NF003828">
    <property type="entry name" value="PRK05416.1"/>
    <property type="match status" value="1"/>
</dbReference>
<dbReference type="PANTHER" id="PTHR30448">
    <property type="entry name" value="RNASE ADAPTER PROTEIN RAPZ"/>
    <property type="match status" value="1"/>
</dbReference>
<dbReference type="PANTHER" id="PTHR30448:SF0">
    <property type="entry name" value="RNASE ADAPTER PROTEIN RAPZ"/>
    <property type="match status" value="1"/>
</dbReference>
<dbReference type="Pfam" id="PF22740">
    <property type="entry name" value="PapZ_C"/>
    <property type="match status" value="1"/>
</dbReference>
<dbReference type="Pfam" id="PF03668">
    <property type="entry name" value="RapZ-like_N"/>
    <property type="match status" value="1"/>
</dbReference>
<dbReference type="PIRSF" id="PIRSF005052">
    <property type="entry name" value="P-loopkin"/>
    <property type="match status" value="1"/>
</dbReference>
<dbReference type="SUPFAM" id="SSF52540">
    <property type="entry name" value="P-loop containing nucleoside triphosphate hydrolases"/>
    <property type="match status" value="1"/>
</dbReference>
<sequence>MDNNEKEKSKSELLVVTGLSGAGKSLVIQCLEDMGYFCVDNLPPVLLPKFVELMEQGNPSLRKVAIAIDLRGKELFNSLVAVVDKVKSESDVIIDVMFLEASTEKLISRYKETRRAHPLMEQGKRSLINAINDEREHLSQIRSIANFVIDTTKLSPKELKERIRRYYEDEEFETFTINVTSFGFKHGIQMDADLVFDVRFLPNPYYVVDLRPLTGLDKDVYNYVMKWKETEIFFEKLTDLLDFMIPGYKKEGKSQLVIAIGCTGGQHRSVALAERLGNYLNEVFEYNVYVHHRDAHIESGEKK</sequence>
<name>Y787_STAA8</name>
<proteinExistence type="inferred from homology"/>